<proteinExistence type="inferred from homology"/>
<keyword id="KW-1003">Cell membrane</keyword>
<keyword id="KW-0472">Membrane</keyword>
<keyword id="KW-1185">Reference proteome</keyword>
<keyword id="KW-0812">Transmembrane</keyword>
<keyword id="KW-1133">Transmembrane helix</keyword>
<dbReference type="EMBL" id="D26185">
    <property type="protein sequence ID" value="BAA05292.1"/>
    <property type="molecule type" value="Genomic_DNA"/>
</dbReference>
<dbReference type="EMBL" id="AL009126">
    <property type="protein sequence ID" value="CAB11833.1"/>
    <property type="molecule type" value="Genomic_DNA"/>
</dbReference>
<dbReference type="PIR" id="S66087">
    <property type="entry name" value="S66087"/>
</dbReference>
<dbReference type="RefSeq" id="NP_387938.1">
    <property type="nucleotide sequence ID" value="NC_000964.3"/>
</dbReference>
<dbReference type="RefSeq" id="WP_003243709.1">
    <property type="nucleotide sequence ID" value="NZ_OZ025638.1"/>
</dbReference>
<dbReference type="SMR" id="P37555"/>
<dbReference type="FunCoup" id="P37555">
    <property type="interactions" value="470"/>
</dbReference>
<dbReference type="STRING" id="224308.BSU00570"/>
<dbReference type="PaxDb" id="224308-BSU00570"/>
<dbReference type="EnsemblBacteria" id="CAB11833">
    <property type="protein sequence ID" value="CAB11833"/>
    <property type="gene ID" value="BSU_00570"/>
</dbReference>
<dbReference type="GeneID" id="936539"/>
<dbReference type="KEGG" id="bsu:BSU00570"/>
<dbReference type="PATRIC" id="fig|224308.179.peg.57"/>
<dbReference type="eggNOG" id="COG2244">
    <property type="taxonomic scope" value="Bacteria"/>
</dbReference>
<dbReference type="InParanoid" id="P37555"/>
<dbReference type="OrthoDB" id="9775950at2"/>
<dbReference type="PhylomeDB" id="P37555"/>
<dbReference type="BioCyc" id="BSUB:BSU00570-MONOMER"/>
<dbReference type="Proteomes" id="UP000001570">
    <property type="component" value="Chromosome"/>
</dbReference>
<dbReference type="GO" id="GO:0005886">
    <property type="term" value="C:plasma membrane"/>
    <property type="evidence" value="ECO:0000318"/>
    <property type="project" value="GO_Central"/>
</dbReference>
<dbReference type="CDD" id="cd13124">
    <property type="entry name" value="MATE_SpoVB_like"/>
    <property type="match status" value="1"/>
</dbReference>
<dbReference type="InterPro" id="IPR024923">
    <property type="entry name" value="PG_synth_SpoVB"/>
</dbReference>
<dbReference type="InterPro" id="IPR050833">
    <property type="entry name" value="Poly_Biosynth_Transport"/>
</dbReference>
<dbReference type="InterPro" id="IPR002797">
    <property type="entry name" value="Polysacc_synth"/>
</dbReference>
<dbReference type="PANTHER" id="PTHR30250:SF29">
    <property type="entry name" value="POLYSACCHARIDE BIOSYNTHESIS PROTEIN C-TERMINAL DOMAIN-CONTAINING PROTEIN"/>
    <property type="match status" value="1"/>
</dbReference>
<dbReference type="PANTHER" id="PTHR30250">
    <property type="entry name" value="PST FAMILY PREDICTED COLANIC ACID TRANSPORTER"/>
    <property type="match status" value="1"/>
</dbReference>
<dbReference type="Pfam" id="PF01943">
    <property type="entry name" value="Polysacc_synt"/>
    <property type="match status" value="1"/>
</dbReference>
<dbReference type="PIRSF" id="PIRSF038958">
    <property type="entry name" value="PG_synth_SpoVB"/>
    <property type="match status" value="1"/>
</dbReference>
<feature type="chain" id="PRO_0000166455" description="Uncharacterized membrane protein YabM">
    <location>
        <begin position="1"/>
        <end position="532"/>
    </location>
</feature>
<feature type="transmembrane region" description="Helical" evidence="1">
    <location>
        <begin position="25"/>
        <end position="45"/>
    </location>
</feature>
<feature type="transmembrane region" description="Helical" evidence="1">
    <location>
        <begin position="65"/>
        <end position="85"/>
    </location>
</feature>
<feature type="transmembrane region" description="Helical" evidence="1">
    <location>
        <begin position="109"/>
        <end position="129"/>
    </location>
</feature>
<feature type="transmembrane region" description="Helical" evidence="1">
    <location>
        <begin position="134"/>
        <end position="154"/>
    </location>
</feature>
<feature type="transmembrane region" description="Helical" evidence="1">
    <location>
        <begin position="179"/>
        <end position="199"/>
    </location>
</feature>
<feature type="transmembrane region" description="Helical" evidence="1">
    <location>
        <begin position="203"/>
        <end position="223"/>
    </location>
</feature>
<feature type="transmembrane region" description="Helical" evidence="1">
    <location>
        <begin position="248"/>
        <end position="268"/>
    </location>
</feature>
<feature type="transmembrane region" description="Helical" evidence="1">
    <location>
        <begin position="302"/>
        <end position="322"/>
    </location>
</feature>
<feature type="transmembrane region" description="Helical" evidence="1">
    <location>
        <begin position="344"/>
        <end position="364"/>
    </location>
</feature>
<feature type="transmembrane region" description="Helical" evidence="1">
    <location>
        <begin position="371"/>
        <end position="391"/>
    </location>
</feature>
<feature type="transmembrane region" description="Helical" evidence="1">
    <location>
        <begin position="392"/>
        <end position="412"/>
    </location>
</feature>
<feature type="transmembrane region" description="Helical" evidence="1">
    <location>
        <begin position="425"/>
        <end position="445"/>
    </location>
</feature>
<feature type="transmembrane region" description="Helical" evidence="1">
    <location>
        <begin position="459"/>
        <end position="479"/>
    </location>
</feature>
<feature type="transmembrane region" description="Helical" evidence="1">
    <location>
        <begin position="494"/>
        <end position="514"/>
    </location>
</feature>
<organism>
    <name type="scientific">Bacillus subtilis (strain 168)</name>
    <dbReference type="NCBI Taxonomy" id="224308"/>
    <lineage>
        <taxon>Bacteria</taxon>
        <taxon>Bacillati</taxon>
        <taxon>Bacillota</taxon>
        <taxon>Bacilli</taxon>
        <taxon>Bacillales</taxon>
        <taxon>Bacillaceae</taxon>
        <taxon>Bacillus</taxon>
    </lineage>
</organism>
<comment type="subcellular location">
    <subcellularLocation>
        <location evidence="2">Cell membrane</location>
        <topology evidence="2">Multi-pass membrane protein</topology>
    </subcellularLocation>
</comment>
<comment type="similarity">
    <text evidence="2">Belongs to the polysaccharide synthase family.</text>
</comment>
<name>YABM_BACSU</name>
<evidence type="ECO:0000255" key="1"/>
<evidence type="ECO:0000305" key="2"/>
<sequence length="532" mass="57357">MDDSIGVKRHWIWQGAFVLILAGVITKILSAVYRVPFQNIVGDVGFYIYQQVYPFLGIAVMLSTSGFPVIISKLMNDYSEKNHHTILKISALFLSLIGILLFLCLYLGAVPIALFMGDSHLAVLIQVAAYAFLLFPFVALLRGGFQGRHEMLPSALSQMTEQFLRVAVLLGLSFWLVKKGASLYTAGAAAASGSLAGSLVALIILGFFWFKTKRDNQTDRQNENVITTKELTKKLLLYSVTICVSSLLLLFIQLVDALNLYALLSGGEASEEAKCLKGIYDRGQPLLQLGSVFAVSIATSLVPYISMAVKNKELKIMKEKITSSLKLCLVLGTGASAGLICILKPVNIMLFQNGEGTGALQVFSCSILFASLAVTAAAVLQGAGYTVFPAIAVGAGVAVKWVLNTLLVPRYGIEGASLATAASFAAVAGLNLYQLRQKEWLDKLRGVLIPIIGSALLMSAVLLAYTRLWTFLFPATGRGAAVIESLSAVAIGGAVFIYCMMRLGIFTDEELNSVPFGSKLSKFMRRREQNGG</sequence>
<protein>
    <recommendedName>
        <fullName>Uncharacterized membrane protein YabM</fullName>
    </recommendedName>
</protein>
<accession>P37555</accession>
<gene>
    <name type="primary">yabM</name>
    <name type="ordered locus">BSU00570</name>
</gene>
<reference key="1">
    <citation type="journal article" date="1994" name="DNA Res.">
        <title>Systematic sequencing of the 180 kilobase region of the Bacillus subtilis chromosome containing the replication origin.</title>
        <authorList>
            <person name="Ogasawara N."/>
            <person name="Nakai S."/>
            <person name="Yoshikawa H."/>
        </authorList>
    </citation>
    <scope>NUCLEOTIDE SEQUENCE [GENOMIC DNA]</scope>
    <source>
        <strain>168</strain>
    </source>
</reference>
<reference key="2">
    <citation type="journal article" date="1997" name="Nature">
        <title>The complete genome sequence of the Gram-positive bacterium Bacillus subtilis.</title>
        <authorList>
            <person name="Kunst F."/>
            <person name="Ogasawara N."/>
            <person name="Moszer I."/>
            <person name="Albertini A.M."/>
            <person name="Alloni G."/>
            <person name="Azevedo V."/>
            <person name="Bertero M.G."/>
            <person name="Bessieres P."/>
            <person name="Bolotin A."/>
            <person name="Borchert S."/>
            <person name="Borriss R."/>
            <person name="Boursier L."/>
            <person name="Brans A."/>
            <person name="Braun M."/>
            <person name="Brignell S.C."/>
            <person name="Bron S."/>
            <person name="Brouillet S."/>
            <person name="Bruschi C.V."/>
            <person name="Caldwell B."/>
            <person name="Capuano V."/>
            <person name="Carter N.M."/>
            <person name="Choi S.-K."/>
            <person name="Codani J.-J."/>
            <person name="Connerton I.F."/>
            <person name="Cummings N.J."/>
            <person name="Daniel R.A."/>
            <person name="Denizot F."/>
            <person name="Devine K.M."/>
            <person name="Duesterhoeft A."/>
            <person name="Ehrlich S.D."/>
            <person name="Emmerson P.T."/>
            <person name="Entian K.-D."/>
            <person name="Errington J."/>
            <person name="Fabret C."/>
            <person name="Ferrari E."/>
            <person name="Foulger D."/>
            <person name="Fritz C."/>
            <person name="Fujita M."/>
            <person name="Fujita Y."/>
            <person name="Fuma S."/>
            <person name="Galizzi A."/>
            <person name="Galleron N."/>
            <person name="Ghim S.-Y."/>
            <person name="Glaser P."/>
            <person name="Goffeau A."/>
            <person name="Golightly E.J."/>
            <person name="Grandi G."/>
            <person name="Guiseppi G."/>
            <person name="Guy B.J."/>
            <person name="Haga K."/>
            <person name="Haiech J."/>
            <person name="Harwood C.R."/>
            <person name="Henaut A."/>
            <person name="Hilbert H."/>
            <person name="Holsappel S."/>
            <person name="Hosono S."/>
            <person name="Hullo M.-F."/>
            <person name="Itaya M."/>
            <person name="Jones L.-M."/>
            <person name="Joris B."/>
            <person name="Karamata D."/>
            <person name="Kasahara Y."/>
            <person name="Klaerr-Blanchard M."/>
            <person name="Klein C."/>
            <person name="Kobayashi Y."/>
            <person name="Koetter P."/>
            <person name="Koningstein G."/>
            <person name="Krogh S."/>
            <person name="Kumano M."/>
            <person name="Kurita K."/>
            <person name="Lapidus A."/>
            <person name="Lardinois S."/>
            <person name="Lauber J."/>
            <person name="Lazarevic V."/>
            <person name="Lee S.-M."/>
            <person name="Levine A."/>
            <person name="Liu H."/>
            <person name="Masuda S."/>
            <person name="Mauel C."/>
            <person name="Medigue C."/>
            <person name="Medina N."/>
            <person name="Mellado R.P."/>
            <person name="Mizuno M."/>
            <person name="Moestl D."/>
            <person name="Nakai S."/>
            <person name="Noback M."/>
            <person name="Noone D."/>
            <person name="O'Reilly M."/>
            <person name="Ogawa K."/>
            <person name="Ogiwara A."/>
            <person name="Oudega B."/>
            <person name="Park S.-H."/>
            <person name="Parro V."/>
            <person name="Pohl T.M."/>
            <person name="Portetelle D."/>
            <person name="Porwollik S."/>
            <person name="Prescott A.M."/>
            <person name="Presecan E."/>
            <person name="Pujic P."/>
            <person name="Purnelle B."/>
            <person name="Rapoport G."/>
            <person name="Rey M."/>
            <person name="Reynolds S."/>
            <person name="Rieger M."/>
            <person name="Rivolta C."/>
            <person name="Rocha E."/>
            <person name="Roche B."/>
            <person name="Rose M."/>
            <person name="Sadaie Y."/>
            <person name="Sato T."/>
            <person name="Scanlan E."/>
            <person name="Schleich S."/>
            <person name="Schroeter R."/>
            <person name="Scoffone F."/>
            <person name="Sekiguchi J."/>
            <person name="Sekowska A."/>
            <person name="Seror S.J."/>
            <person name="Serror P."/>
            <person name="Shin B.-S."/>
            <person name="Soldo B."/>
            <person name="Sorokin A."/>
            <person name="Tacconi E."/>
            <person name="Takagi T."/>
            <person name="Takahashi H."/>
            <person name="Takemaru K."/>
            <person name="Takeuchi M."/>
            <person name="Tamakoshi A."/>
            <person name="Tanaka T."/>
            <person name="Terpstra P."/>
            <person name="Tognoni A."/>
            <person name="Tosato V."/>
            <person name="Uchiyama S."/>
            <person name="Vandenbol M."/>
            <person name="Vannier F."/>
            <person name="Vassarotti A."/>
            <person name="Viari A."/>
            <person name="Wambutt R."/>
            <person name="Wedler E."/>
            <person name="Wedler H."/>
            <person name="Weitzenegger T."/>
            <person name="Winters P."/>
            <person name="Wipat A."/>
            <person name="Yamamoto H."/>
            <person name="Yamane K."/>
            <person name="Yasumoto K."/>
            <person name="Yata K."/>
            <person name="Yoshida K."/>
            <person name="Yoshikawa H.-F."/>
            <person name="Zumstein E."/>
            <person name="Yoshikawa H."/>
            <person name="Danchin A."/>
        </authorList>
    </citation>
    <scope>NUCLEOTIDE SEQUENCE [LARGE SCALE GENOMIC DNA]</scope>
    <source>
        <strain>168</strain>
    </source>
</reference>